<dbReference type="EC" id="3.6.5.3" evidence="2"/>
<dbReference type="EMBL" id="CU469464">
    <property type="protein sequence ID" value="CAP18582.1"/>
    <property type="molecule type" value="Genomic_DNA"/>
</dbReference>
<dbReference type="SMR" id="B3QZH5"/>
<dbReference type="STRING" id="37692.ATP_00395"/>
<dbReference type="KEGG" id="pml:ATP_00395"/>
<dbReference type="eggNOG" id="COG0050">
    <property type="taxonomic scope" value="Bacteria"/>
</dbReference>
<dbReference type="HOGENOM" id="CLU_007265_0_1_14"/>
<dbReference type="Proteomes" id="UP000002020">
    <property type="component" value="Chromosome"/>
</dbReference>
<dbReference type="GO" id="GO:0005737">
    <property type="term" value="C:cytoplasm"/>
    <property type="evidence" value="ECO:0007669"/>
    <property type="project" value="UniProtKB-SubCell"/>
</dbReference>
<dbReference type="GO" id="GO:0005525">
    <property type="term" value="F:GTP binding"/>
    <property type="evidence" value="ECO:0007669"/>
    <property type="project" value="UniProtKB-UniRule"/>
</dbReference>
<dbReference type="GO" id="GO:0003924">
    <property type="term" value="F:GTPase activity"/>
    <property type="evidence" value="ECO:0007669"/>
    <property type="project" value="InterPro"/>
</dbReference>
<dbReference type="GO" id="GO:0003746">
    <property type="term" value="F:translation elongation factor activity"/>
    <property type="evidence" value="ECO:0007669"/>
    <property type="project" value="UniProtKB-UniRule"/>
</dbReference>
<dbReference type="CDD" id="cd01884">
    <property type="entry name" value="EF_Tu"/>
    <property type="match status" value="1"/>
</dbReference>
<dbReference type="CDD" id="cd03697">
    <property type="entry name" value="EFTU_II"/>
    <property type="match status" value="1"/>
</dbReference>
<dbReference type="CDD" id="cd03707">
    <property type="entry name" value="EFTU_III"/>
    <property type="match status" value="1"/>
</dbReference>
<dbReference type="FunFam" id="2.40.30.10:FF:000001">
    <property type="entry name" value="Elongation factor Tu"/>
    <property type="match status" value="1"/>
</dbReference>
<dbReference type="FunFam" id="3.40.50.300:FF:000003">
    <property type="entry name" value="Elongation factor Tu"/>
    <property type="match status" value="1"/>
</dbReference>
<dbReference type="Gene3D" id="3.40.50.300">
    <property type="entry name" value="P-loop containing nucleotide triphosphate hydrolases"/>
    <property type="match status" value="1"/>
</dbReference>
<dbReference type="Gene3D" id="2.40.30.10">
    <property type="entry name" value="Translation factors"/>
    <property type="match status" value="2"/>
</dbReference>
<dbReference type="HAMAP" id="MF_00118_B">
    <property type="entry name" value="EF_Tu_B"/>
    <property type="match status" value="1"/>
</dbReference>
<dbReference type="InterPro" id="IPR041709">
    <property type="entry name" value="EF-Tu_GTP-bd"/>
</dbReference>
<dbReference type="InterPro" id="IPR050055">
    <property type="entry name" value="EF-Tu_GTPase"/>
</dbReference>
<dbReference type="InterPro" id="IPR004161">
    <property type="entry name" value="EFTu-like_2"/>
</dbReference>
<dbReference type="InterPro" id="IPR033720">
    <property type="entry name" value="EFTU_2"/>
</dbReference>
<dbReference type="InterPro" id="IPR031157">
    <property type="entry name" value="G_TR_CS"/>
</dbReference>
<dbReference type="InterPro" id="IPR027417">
    <property type="entry name" value="P-loop_NTPase"/>
</dbReference>
<dbReference type="InterPro" id="IPR005225">
    <property type="entry name" value="Small_GTP-bd"/>
</dbReference>
<dbReference type="InterPro" id="IPR000795">
    <property type="entry name" value="T_Tr_GTP-bd_dom"/>
</dbReference>
<dbReference type="InterPro" id="IPR009000">
    <property type="entry name" value="Transl_B-barrel_sf"/>
</dbReference>
<dbReference type="InterPro" id="IPR009001">
    <property type="entry name" value="Transl_elong_EF1A/Init_IF2_C"/>
</dbReference>
<dbReference type="InterPro" id="IPR004541">
    <property type="entry name" value="Transl_elong_EFTu/EF1A_bac/org"/>
</dbReference>
<dbReference type="InterPro" id="IPR004160">
    <property type="entry name" value="Transl_elong_EFTu/EF1A_C"/>
</dbReference>
<dbReference type="NCBIfam" id="TIGR00485">
    <property type="entry name" value="EF-Tu"/>
    <property type="match status" value="1"/>
</dbReference>
<dbReference type="NCBIfam" id="NF000766">
    <property type="entry name" value="PRK00049.1"/>
    <property type="match status" value="1"/>
</dbReference>
<dbReference type="NCBIfam" id="NF009372">
    <property type="entry name" value="PRK12735.1"/>
    <property type="match status" value="1"/>
</dbReference>
<dbReference type="NCBIfam" id="NF009373">
    <property type="entry name" value="PRK12736.1"/>
    <property type="match status" value="1"/>
</dbReference>
<dbReference type="NCBIfam" id="TIGR00231">
    <property type="entry name" value="small_GTP"/>
    <property type="match status" value="1"/>
</dbReference>
<dbReference type="PANTHER" id="PTHR43721:SF22">
    <property type="entry name" value="ELONGATION FACTOR TU, MITOCHONDRIAL"/>
    <property type="match status" value="1"/>
</dbReference>
<dbReference type="PANTHER" id="PTHR43721">
    <property type="entry name" value="ELONGATION FACTOR TU-RELATED"/>
    <property type="match status" value="1"/>
</dbReference>
<dbReference type="Pfam" id="PF00009">
    <property type="entry name" value="GTP_EFTU"/>
    <property type="match status" value="1"/>
</dbReference>
<dbReference type="Pfam" id="PF03144">
    <property type="entry name" value="GTP_EFTU_D2"/>
    <property type="match status" value="1"/>
</dbReference>
<dbReference type="Pfam" id="PF03143">
    <property type="entry name" value="GTP_EFTU_D3"/>
    <property type="match status" value="1"/>
</dbReference>
<dbReference type="PRINTS" id="PR00315">
    <property type="entry name" value="ELONGATNFCT"/>
</dbReference>
<dbReference type="SUPFAM" id="SSF50465">
    <property type="entry name" value="EF-Tu/eEF-1alpha/eIF2-gamma C-terminal domain"/>
    <property type="match status" value="1"/>
</dbReference>
<dbReference type="SUPFAM" id="SSF52540">
    <property type="entry name" value="P-loop containing nucleoside triphosphate hydrolases"/>
    <property type="match status" value="1"/>
</dbReference>
<dbReference type="SUPFAM" id="SSF50447">
    <property type="entry name" value="Translation proteins"/>
    <property type="match status" value="1"/>
</dbReference>
<dbReference type="PROSITE" id="PS00301">
    <property type="entry name" value="G_TR_1"/>
    <property type="match status" value="1"/>
</dbReference>
<dbReference type="PROSITE" id="PS51722">
    <property type="entry name" value="G_TR_2"/>
    <property type="match status" value="1"/>
</dbReference>
<keyword id="KW-0963">Cytoplasm</keyword>
<keyword id="KW-0251">Elongation factor</keyword>
<keyword id="KW-0342">GTP-binding</keyword>
<keyword id="KW-0378">Hydrolase</keyword>
<keyword id="KW-0460">Magnesium</keyword>
<keyword id="KW-0479">Metal-binding</keyword>
<keyword id="KW-0547">Nucleotide-binding</keyword>
<keyword id="KW-0648">Protein biosynthesis</keyword>
<keyword id="KW-1185">Reference proteome</keyword>
<gene>
    <name evidence="2" type="primary">tuf</name>
    <name type="ordered locus">ATP_00395</name>
</gene>
<feature type="chain" id="PRO_1000201410" description="Elongation factor Tu">
    <location>
        <begin position="1"/>
        <end position="392"/>
    </location>
</feature>
<feature type="domain" description="tr-type G">
    <location>
        <begin position="10"/>
        <end position="202"/>
    </location>
</feature>
<feature type="region of interest" description="G1" evidence="1">
    <location>
        <begin position="19"/>
        <end position="26"/>
    </location>
</feature>
<feature type="region of interest" description="G2" evidence="1">
    <location>
        <begin position="60"/>
        <end position="64"/>
    </location>
</feature>
<feature type="region of interest" description="G3" evidence="1">
    <location>
        <begin position="81"/>
        <end position="84"/>
    </location>
</feature>
<feature type="region of interest" description="G4" evidence="1">
    <location>
        <begin position="136"/>
        <end position="139"/>
    </location>
</feature>
<feature type="region of interest" description="G5" evidence="1">
    <location>
        <begin position="174"/>
        <end position="176"/>
    </location>
</feature>
<feature type="binding site" evidence="2">
    <location>
        <begin position="19"/>
        <end position="26"/>
    </location>
    <ligand>
        <name>GTP</name>
        <dbReference type="ChEBI" id="CHEBI:37565"/>
    </ligand>
</feature>
<feature type="binding site" evidence="2">
    <location>
        <position position="26"/>
    </location>
    <ligand>
        <name>Mg(2+)</name>
        <dbReference type="ChEBI" id="CHEBI:18420"/>
    </ligand>
</feature>
<feature type="binding site" evidence="2">
    <location>
        <begin position="81"/>
        <end position="85"/>
    </location>
    <ligand>
        <name>GTP</name>
        <dbReference type="ChEBI" id="CHEBI:37565"/>
    </ligand>
</feature>
<feature type="binding site" evidence="2">
    <location>
        <begin position="136"/>
        <end position="139"/>
    </location>
    <ligand>
        <name>GTP</name>
        <dbReference type="ChEBI" id="CHEBI:37565"/>
    </ligand>
</feature>
<name>EFTU_PHYMT</name>
<evidence type="ECO:0000250" key="1"/>
<evidence type="ECO:0000255" key="2">
    <source>
        <dbReference type="HAMAP-Rule" id="MF_00118"/>
    </source>
</evidence>
<protein>
    <recommendedName>
        <fullName evidence="2">Elongation factor Tu</fullName>
        <shortName evidence="2">EF-Tu</shortName>
        <ecNumber evidence="2">3.6.5.3</ecNumber>
    </recommendedName>
</protein>
<reference key="1">
    <citation type="journal article" date="2008" name="BMC Genomics">
        <title>The linear chromosome of the plant-pathogenic mycoplasma 'Candidatus Phytoplasma mali'.</title>
        <authorList>
            <person name="Kube M."/>
            <person name="Schneider B."/>
            <person name="Kuhl H."/>
            <person name="Dandekar T."/>
            <person name="Heitmann K."/>
            <person name="Migdoll A.M."/>
            <person name="Reinhardt R."/>
            <person name="Seemueller E."/>
        </authorList>
    </citation>
    <scope>NUCLEOTIDE SEQUENCE [LARGE SCALE GENOMIC DNA]</scope>
    <source>
        <strain>AT</strain>
    </source>
</reference>
<organism>
    <name type="scientific">Phytoplasma mali (strain AT)</name>
    <dbReference type="NCBI Taxonomy" id="482235"/>
    <lineage>
        <taxon>Bacteria</taxon>
        <taxon>Bacillati</taxon>
        <taxon>Mycoplasmatota</taxon>
        <taxon>Mollicutes</taxon>
        <taxon>Acholeplasmatales</taxon>
        <taxon>Acholeplasmataceae</taxon>
        <taxon>Candidatus Phytoplasma</taxon>
        <taxon>16SrX (Apple proliferation group)</taxon>
    </lineage>
</organism>
<proteinExistence type="inferred from homology"/>
<comment type="function">
    <text evidence="2">GTP hydrolase that promotes the GTP-dependent binding of aminoacyl-tRNA to the A-site of ribosomes during protein biosynthesis.</text>
</comment>
<comment type="catalytic activity">
    <reaction evidence="2">
        <text>GTP + H2O = GDP + phosphate + H(+)</text>
        <dbReference type="Rhea" id="RHEA:19669"/>
        <dbReference type="ChEBI" id="CHEBI:15377"/>
        <dbReference type="ChEBI" id="CHEBI:15378"/>
        <dbReference type="ChEBI" id="CHEBI:37565"/>
        <dbReference type="ChEBI" id="CHEBI:43474"/>
        <dbReference type="ChEBI" id="CHEBI:58189"/>
        <dbReference type="EC" id="3.6.5.3"/>
    </reaction>
    <physiologicalReaction direction="left-to-right" evidence="2">
        <dbReference type="Rhea" id="RHEA:19670"/>
    </physiologicalReaction>
</comment>
<comment type="subunit">
    <text evidence="2">Monomer.</text>
</comment>
<comment type="subcellular location">
    <subcellularLocation>
        <location evidence="2">Cytoplasm</location>
    </subcellularLocation>
</comment>
<comment type="similarity">
    <text evidence="2">Belongs to the TRAFAC class translation factor GTPase superfamily. Classic translation factor GTPase family. EF-Tu/EF-1A subfamily.</text>
</comment>
<accession>B3QZH5</accession>
<sequence length="392" mass="43729">MSSKVFLRDKVHVNVGTIGHVDHGKTTLTAAITKILSTKGLAENKSYDQIDKTKEEKERGITINTTHVSYETEKRHYAHVDCPGHADYVKNMITGAAQMDAGILVVSAYHGVMPQTREHVLLAGQVGISKLIVFLNKCDLVKEEEWIHLVEMEVRELLNEYKFDGDKTPFVRGSALKALEGTDVEGINKLLEVLDEYIEDPIRDVEKPFLMPVEGVHTITGRGTVATGRVERGKIKISEEVEIIGLKETKKAIITGLEMFKKELDFAQAGDNVGILLRGITRDQIERGQVLAKPGSLNAYHKFLSQVYILTQQEGGRHTAFFSNYRPQFYFRTTDVTGFIKLKKDVKMVLPGDRTELIVELNHPIAIEAGTKFSIREGGRTIGAGTVTEIIE</sequence>